<evidence type="ECO:0000256" key="1">
    <source>
        <dbReference type="SAM" id="MobiDB-lite"/>
    </source>
</evidence>
<evidence type="ECO:0000269" key="2">
    <source>
    </source>
</evidence>
<evidence type="ECO:0000303" key="3">
    <source>
    </source>
</evidence>
<evidence type="ECO:0000305" key="4"/>
<evidence type="ECO:0000305" key="5">
    <source>
    </source>
</evidence>
<evidence type="ECO:0000312" key="6">
    <source>
        <dbReference type="Araport" id="AT1G24310"/>
    </source>
</evidence>
<evidence type="ECO:0000312" key="7">
    <source>
        <dbReference type="EMBL" id="AAC00594.1"/>
    </source>
</evidence>
<evidence type="ECO:0000312" key="8">
    <source>
        <dbReference type="EMBL" id="BAC42318.1"/>
    </source>
</evidence>
<sequence length="377" mass="41817">MFGTPSSSPSFGTPSSTPAFGTSSPAFGTPSATPAFGTPSNPSFSSGGFGSSLFSSPFSSQQPQQQQQQQQQQQPSSLFQQQPSSNFGFQSPFNNTAQQQQQTPFPNAQLTTQMAPVAPIPYSLADRDVQAIIEAYKEDPTNPKYAFQHLLFSVTEPQYRVKPAAVSDIMWAEAMSKLEGMDSTERERLWPQLVQGFKDLSQRLKLQDEVLVSDRDRIKTTQSNVKMLQRHLQASTFPSIERLRQKEQSLQRRMLRVMRIIEGLEGKGFRLPLTKGEAELSEKLTAITRQVKGPGAELSRRVQSLQTISRAQANSIAAGSSLYLPGSTKIDEQSLIDMQEVLQQETEAIGRLGNVLKRDMRDMEIMVAEDTEMALDS</sequence>
<gene>
    <name evidence="3" type="primary">NUP54</name>
    <name evidence="6" type="ordered locus">At1g24310</name>
    <name evidence="7" type="ORF">F3I6.25</name>
</gene>
<organism evidence="8">
    <name type="scientific">Arabidopsis thaliana</name>
    <name type="common">Mouse-ear cress</name>
    <dbReference type="NCBI Taxonomy" id="3702"/>
    <lineage>
        <taxon>Eukaryota</taxon>
        <taxon>Viridiplantae</taxon>
        <taxon>Streptophyta</taxon>
        <taxon>Embryophyta</taxon>
        <taxon>Tracheophyta</taxon>
        <taxon>Spermatophyta</taxon>
        <taxon>Magnoliopsida</taxon>
        <taxon>eudicotyledons</taxon>
        <taxon>Gunneridae</taxon>
        <taxon>Pentapetalae</taxon>
        <taxon>rosids</taxon>
        <taxon>malvids</taxon>
        <taxon>Brassicales</taxon>
        <taxon>Brassicaceae</taxon>
        <taxon>Camelineae</taxon>
        <taxon>Arabidopsis</taxon>
    </lineage>
</organism>
<name>NUP54_ARATH</name>
<reference key="1">
    <citation type="journal article" date="2000" name="Nature">
        <title>Sequence and analysis of chromosome 1 of the plant Arabidopsis thaliana.</title>
        <authorList>
            <person name="Theologis A."/>
            <person name="Ecker J.R."/>
            <person name="Palm C.J."/>
            <person name="Federspiel N.A."/>
            <person name="Kaul S."/>
            <person name="White O."/>
            <person name="Alonso J."/>
            <person name="Altafi H."/>
            <person name="Araujo R."/>
            <person name="Bowman C.L."/>
            <person name="Brooks S.Y."/>
            <person name="Buehler E."/>
            <person name="Chan A."/>
            <person name="Chao Q."/>
            <person name="Chen H."/>
            <person name="Cheuk R.F."/>
            <person name="Chin C.W."/>
            <person name="Chung M.K."/>
            <person name="Conn L."/>
            <person name="Conway A.B."/>
            <person name="Conway A.R."/>
            <person name="Creasy T.H."/>
            <person name="Dewar K."/>
            <person name="Dunn P."/>
            <person name="Etgu P."/>
            <person name="Feldblyum T.V."/>
            <person name="Feng J.-D."/>
            <person name="Fong B."/>
            <person name="Fujii C.Y."/>
            <person name="Gill J.E."/>
            <person name="Goldsmith A.D."/>
            <person name="Haas B."/>
            <person name="Hansen N.F."/>
            <person name="Hughes B."/>
            <person name="Huizar L."/>
            <person name="Hunter J.L."/>
            <person name="Jenkins J."/>
            <person name="Johnson-Hopson C."/>
            <person name="Khan S."/>
            <person name="Khaykin E."/>
            <person name="Kim C.J."/>
            <person name="Koo H.L."/>
            <person name="Kremenetskaia I."/>
            <person name="Kurtz D.B."/>
            <person name="Kwan A."/>
            <person name="Lam B."/>
            <person name="Langin-Hooper S."/>
            <person name="Lee A."/>
            <person name="Lee J.M."/>
            <person name="Lenz C.A."/>
            <person name="Li J.H."/>
            <person name="Li Y.-P."/>
            <person name="Lin X."/>
            <person name="Liu S.X."/>
            <person name="Liu Z.A."/>
            <person name="Luros J.S."/>
            <person name="Maiti R."/>
            <person name="Marziali A."/>
            <person name="Militscher J."/>
            <person name="Miranda M."/>
            <person name="Nguyen M."/>
            <person name="Nierman W.C."/>
            <person name="Osborne B.I."/>
            <person name="Pai G."/>
            <person name="Peterson J."/>
            <person name="Pham P.K."/>
            <person name="Rizzo M."/>
            <person name="Rooney T."/>
            <person name="Rowley D."/>
            <person name="Sakano H."/>
            <person name="Salzberg S.L."/>
            <person name="Schwartz J.R."/>
            <person name="Shinn P."/>
            <person name="Southwick A.M."/>
            <person name="Sun H."/>
            <person name="Tallon L.J."/>
            <person name="Tambunga G."/>
            <person name="Toriumi M.J."/>
            <person name="Town C.D."/>
            <person name="Utterback T."/>
            <person name="Van Aken S."/>
            <person name="Vaysberg M."/>
            <person name="Vysotskaia V.S."/>
            <person name="Walker M."/>
            <person name="Wu D."/>
            <person name="Yu G."/>
            <person name="Fraser C.M."/>
            <person name="Venter J.C."/>
            <person name="Davis R.W."/>
        </authorList>
    </citation>
    <scope>NUCLEOTIDE SEQUENCE [LARGE SCALE GENOMIC DNA]</scope>
    <source>
        <strain>cv. Columbia</strain>
    </source>
</reference>
<reference key="2">
    <citation type="journal article" date="2017" name="Plant J.">
        <title>Araport11: a complete reannotation of the Arabidopsis thaliana reference genome.</title>
        <authorList>
            <person name="Cheng C.Y."/>
            <person name="Krishnakumar V."/>
            <person name="Chan A.P."/>
            <person name="Thibaud-Nissen F."/>
            <person name="Schobel S."/>
            <person name="Town C.D."/>
        </authorList>
    </citation>
    <scope>GENOME REANNOTATION</scope>
    <source>
        <strain>cv. Columbia</strain>
    </source>
</reference>
<reference key="3">
    <citation type="journal article" date="2002" name="Science">
        <title>Functional annotation of a full-length Arabidopsis cDNA collection.</title>
        <authorList>
            <person name="Seki M."/>
            <person name="Narusaka M."/>
            <person name="Kamiya A."/>
            <person name="Ishida J."/>
            <person name="Satou M."/>
            <person name="Sakurai T."/>
            <person name="Nakajima M."/>
            <person name="Enju A."/>
            <person name="Akiyama K."/>
            <person name="Oono Y."/>
            <person name="Muramatsu M."/>
            <person name="Hayashizaki Y."/>
            <person name="Kawai J."/>
            <person name="Carninci P."/>
            <person name="Itoh M."/>
            <person name="Ishii Y."/>
            <person name="Arakawa T."/>
            <person name="Shibata K."/>
            <person name="Shinagawa A."/>
            <person name="Shinozaki K."/>
        </authorList>
    </citation>
    <scope>NUCLEOTIDE SEQUENCE [LARGE SCALE MRNA]</scope>
    <source>
        <strain>cv. Columbia</strain>
    </source>
</reference>
<reference key="4">
    <citation type="journal article" date="2003" name="Science">
        <title>Empirical analysis of transcriptional activity in the Arabidopsis genome.</title>
        <authorList>
            <person name="Yamada K."/>
            <person name="Lim J."/>
            <person name="Dale J.M."/>
            <person name="Chen H."/>
            <person name="Shinn P."/>
            <person name="Palm C.J."/>
            <person name="Southwick A.M."/>
            <person name="Wu H.C."/>
            <person name="Kim C.J."/>
            <person name="Nguyen M."/>
            <person name="Pham P.K."/>
            <person name="Cheuk R.F."/>
            <person name="Karlin-Newmann G."/>
            <person name="Liu S.X."/>
            <person name="Lam B."/>
            <person name="Sakano H."/>
            <person name="Wu T."/>
            <person name="Yu G."/>
            <person name="Miranda M."/>
            <person name="Quach H.L."/>
            <person name="Tripp M."/>
            <person name="Chang C.H."/>
            <person name="Lee J.M."/>
            <person name="Toriumi M.J."/>
            <person name="Chan M.M."/>
            <person name="Tang C.C."/>
            <person name="Onodera C.S."/>
            <person name="Deng J.M."/>
            <person name="Akiyama K."/>
            <person name="Ansari Y."/>
            <person name="Arakawa T."/>
            <person name="Banh J."/>
            <person name="Banno F."/>
            <person name="Bowser L."/>
            <person name="Brooks S.Y."/>
            <person name="Carninci P."/>
            <person name="Chao Q."/>
            <person name="Choy N."/>
            <person name="Enju A."/>
            <person name="Goldsmith A.D."/>
            <person name="Gurjal M."/>
            <person name="Hansen N.F."/>
            <person name="Hayashizaki Y."/>
            <person name="Johnson-Hopson C."/>
            <person name="Hsuan V.W."/>
            <person name="Iida K."/>
            <person name="Karnes M."/>
            <person name="Khan S."/>
            <person name="Koesema E."/>
            <person name="Ishida J."/>
            <person name="Jiang P.X."/>
            <person name="Jones T."/>
            <person name="Kawai J."/>
            <person name="Kamiya A."/>
            <person name="Meyers C."/>
            <person name="Nakajima M."/>
            <person name="Narusaka M."/>
            <person name="Seki M."/>
            <person name="Sakurai T."/>
            <person name="Satou M."/>
            <person name="Tamse R."/>
            <person name="Vaysberg M."/>
            <person name="Wallender E.K."/>
            <person name="Wong C."/>
            <person name="Yamamura Y."/>
            <person name="Yuan S."/>
            <person name="Shinozaki K."/>
            <person name="Davis R.W."/>
            <person name="Theologis A."/>
            <person name="Ecker J.R."/>
        </authorList>
    </citation>
    <scope>NUCLEOTIDE SEQUENCE [LARGE SCALE MRNA]</scope>
    <source>
        <strain>cv. Columbia</strain>
    </source>
</reference>
<reference key="5">
    <citation type="journal article" date="2010" name="Plant Cell">
        <title>Identification and characterization of nuclear pore complex components in Arabidopsis thaliana.</title>
        <authorList>
            <person name="Tamura K."/>
            <person name="Fukao Y."/>
            <person name="Iwamoto M."/>
            <person name="Haraguchi T."/>
            <person name="Hara-Nishimura I."/>
        </authorList>
    </citation>
    <scope>IDENTIFICATION IN THE NUCLEAR PORE COMPLEX BY MASS SPECTROMETRY</scope>
    <scope>SUBCELLULAR LOCATION</scope>
    <scope>NOMENCLATURE</scope>
</reference>
<proteinExistence type="evidence at protein level"/>
<feature type="chain" id="PRO_0000431083" description="Nuclear pore complex protein NUP54">
    <location>
        <begin position="1"/>
        <end position="377"/>
    </location>
</feature>
<feature type="repeat" description="1">
    <location>
        <begin position="2"/>
        <end position="3"/>
    </location>
</feature>
<feature type="repeat" description="2">
    <location>
        <begin position="11"/>
        <end position="12"/>
    </location>
</feature>
<feature type="repeat" description="3">
    <location>
        <begin position="20"/>
        <end position="21"/>
    </location>
</feature>
<feature type="repeat" description="4">
    <location>
        <begin position="27"/>
        <end position="28"/>
    </location>
</feature>
<feature type="repeat" description="5">
    <location>
        <begin position="36"/>
        <end position="37"/>
    </location>
</feature>
<feature type="repeat" description="6">
    <location>
        <begin position="49"/>
        <end position="50"/>
    </location>
</feature>
<feature type="repeat" description="7">
    <location>
        <begin position="87"/>
        <end position="88"/>
    </location>
</feature>
<feature type="region of interest" description="Disordered" evidence="1">
    <location>
        <begin position="1"/>
        <end position="104"/>
    </location>
</feature>
<feature type="region of interest" description="7 X 2 AA repeats of F-G">
    <location>
        <begin position="2"/>
        <end position="88"/>
    </location>
</feature>
<feature type="compositionally biased region" description="Low complexity" evidence="1">
    <location>
        <begin position="1"/>
        <end position="18"/>
    </location>
</feature>
<feature type="compositionally biased region" description="Polar residues" evidence="1">
    <location>
        <begin position="19"/>
        <end position="32"/>
    </location>
</feature>
<feature type="compositionally biased region" description="Low complexity" evidence="1">
    <location>
        <begin position="39"/>
        <end position="104"/>
    </location>
</feature>
<keyword id="KW-0509">mRNA transport</keyword>
<keyword id="KW-0906">Nuclear pore complex</keyword>
<keyword id="KW-0539">Nucleus</keyword>
<keyword id="KW-0653">Protein transport</keyword>
<keyword id="KW-1185">Reference proteome</keyword>
<keyword id="KW-0677">Repeat</keyword>
<keyword id="KW-0811">Translocation</keyword>
<keyword id="KW-0813">Transport</keyword>
<protein>
    <recommendedName>
        <fullName evidence="3">Nuclear pore complex protein NUP54</fullName>
    </recommendedName>
    <alternativeName>
        <fullName>Nucleoporin 54</fullName>
    </alternativeName>
</protein>
<accession>Q8GYF7</accession>
<accession>O48698</accession>
<dbReference type="EMBL" id="AC002396">
    <property type="protein sequence ID" value="AAC00594.1"/>
    <property type="status" value="ALT_SEQ"/>
    <property type="molecule type" value="Genomic_DNA"/>
</dbReference>
<dbReference type="EMBL" id="CP002684">
    <property type="protein sequence ID" value="AEE30515.1"/>
    <property type="molecule type" value="Genomic_DNA"/>
</dbReference>
<dbReference type="EMBL" id="AK117665">
    <property type="protein sequence ID" value="BAC42318.1"/>
    <property type="molecule type" value="mRNA"/>
</dbReference>
<dbReference type="EMBL" id="BT004977">
    <property type="protein sequence ID" value="AAO50510.1"/>
    <property type="molecule type" value="mRNA"/>
</dbReference>
<dbReference type="PIR" id="T00662">
    <property type="entry name" value="T00662"/>
</dbReference>
<dbReference type="RefSeq" id="NP_173841.1">
    <property type="nucleotide sequence ID" value="NM_102277.4"/>
</dbReference>
<dbReference type="SMR" id="Q8GYF7"/>
<dbReference type="BioGRID" id="24285">
    <property type="interactions" value="5"/>
</dbReference>
<dbReference type="FunCoup" id="Q8GYF7">
    <property type="interactions" value="883"/>
</dbReference>
<dbReference type="IntAct" id="Q8GYF7">
    <property type="interactions" value="1"/>
</dbReference>
<dbReference type="STRING" id="3702.Q8GYF7"/>
<dbReference type="GlyGen" id="Q8GYF7">
    <property type="glycosylation" value="5 sites"/>
</dbReference>
<dbReference type="MetOSite" id="Q8GYF7"/>
<dbReference type="PaxDb" id="3702-AT1G24310.1"/>
<dbReference type="ProteomicsDB" id="249355"/>
<dbReference type="EnsemblPlants" id="AT1G24310.1">
    <property type="protein sequence ID" value="AT1G24310.1"/>
    <property type="gene ID" value="AT1G24310"/>
</dbReference>
<dbReference type="GeneID" id="839047"/>
<dbReference type="Gramene" id="AT1G24310.1">
    <property type="protein sequence ID" value="AT1G24310.1"/>
    <property type="gene ID" value="AT1G24310"/>
</dbReference>
<dbReference type="KEGG" id="ath:AT1G24310"/>
<dbReference type="Araport" id="AT1G24310"/>
<dbReference type="TAIR" id="AT1G24310">
    <property type="gene designation" value="NUP54"/>
</dbReference>
<dbReference type="eggNOG" id="KOG3091">
    <property type="taxonomic scope" value="Eukaryota"/>
</dbReference>
<dbReference type="HOGENOM" id="CLU_058537_0_0_1"/>
<dbReference type="InParanoid" id="Q8GYF7"/>
<dbReference type="OMA" id="NVMKRDT"/>
<dbReference type="PhylomeDB" id="Q8GYF7"/>
<dbReference type="CD-CODE" id="4299E36E">
    <property type="entry name" value="Nucleolus"/>
</dbReference>
<dbReference type="PRO" id="PR:Q8GYF7"/>
<dbReference type="Proteomes" id="UP000006548">
    <property type="component" value="Chromosome 1"/>
</dbReference>
<dbReference type="ExpressionAtlas" id="Q8GYF7">
    <property type="expression patterns" value="baseline and differential"/>
</dbReference>
<dbReference type="GO" id="GO:0005635">
    <property type="term" value="C:nuclear envelope"/>
    <property type="evidence" value="ECO:0000314"/>
    <property type="project" value="TAIR"/>
</dbReference>
<dbReference type="GO" id="GO:0005643">
    <property type="term" value="C:nuclear pore"/>
    <property type="evidence" value="ECO:0007669"/>
    <property type="project" value="UniProtKB-SubCell"/>
</dbReference>
<dbReference type="GO" id="GO:0005730">
    <property type="term" value="C:nucleolus"/>
    <property type="evidence" value="ECO:0007005"/>
    <property type="project" value="TAIR"/>
</dbReference>
<dbReference type="GO" id="GO:0051028">
    <property type="term" value="P:mRNA transport"/>
    <property type="evidence" value="ECO:0007669"/>
    <property type="project" value="UniProtKB-KW"/>
</dbReference>
<dbReference type="GO" id="GO:0015031">
    <property type="term" value="P:protein transport"/>
    <property type="evidence" value="ECO:0007669"/>
    <property type="project" value="UniProtKB-KW"/>
</dbReference>
<dbReference type="InterPro" id="IPR024864">
    <property type="entry name" value="Nup54/Nup57/Nup44"/>
</dbReference>
<dbReference type="InterPro" id="IPR025712">
    <property type="entry name" value="Nup54_alpha-helical_dom"/>
</dbReference>
<dbReference type="PANTHER" id="PTHR13000">
    <property type="entry name" value="NUCLEOPORIN P54"/>
    <property type="match status" value="1"/>
</dbReference>
<dbReference type="PANTHER" id="PTHR13000:SF0">
    <property type="entry name" value="NUCLEOPORIN P54"/>
    <property type="match status" value="1"/>
</dbReference>
<dbReference type="Pfam" id="PF13874">
    <property type="entry name" value="Nup54"/>
    <property type="match status" value="1"/>
</dbReference>
<comment type="subunit">
    <text evidence="5">Part of the nuclear pore complex (NPC). The NPC has an eight-fold symmetrical structure comprising a central transport channel and two rings, the cytoplasmic and nuclear rings, to which eight filaments are attached. The cytoplasmic filaments have loose ends, while the nuclear filaments are joined in a distal ring, forming a nuclear basket. NPCs are highly dynamic in configuration and composition, and can be devided in 3 subcomplexes, the NUP62 subcomplex, the NUP107-160 subcomplex and the NUP93 subcomplex, containing approximately 30 different nucleoporin proteins.</text>
</comment>
<comment type="subcellular location">
    <subcellularLocation>
        <location evidence="2">Nucleus envelope</location>
    </subcellularLocation>
    <subcellularLocation>
        <location evidence="5">Nucleus</location>
        <location evidence="5">Nuclear pore complex</location>
    </subcellularLocation>
</comment>
<comment type="domain">
    <text evidence="4">Contains FG repeats mediating the translocation through the NPC by interacting with transport factors.</text>
</comment>
<comment type="similarity">
    <text evidence="4">Belongs to the NUP54 family.</text>
</comment>
<comment type="sequence caution" evidence="4">
    <conflict type="erroneous gene model prediction">
        <sequence resource="EMBL-CDS" id="AAC00594"/>
    </conflict>
</comment>